<feature type="chain" id="PRO_0000048959" description="Homeobox protein knotted-1-like 3">
    <location>
        <begin position="1"/>
        <end position="431"/>
    </location>
</feature>
<feature type="domain" description="ELK" evidence="3">
    <location>
        <begin position="322"/>
        <end position="342"/>
    </location>
</feature>
<feature type="DNA-binding region" description="Homeobox; TALE-type" evidence="2">
    <location>
        <begin position="343"/>
        <end position="406"/>
    </location>
</feature>
<feature type="region of interest" description="Disordered" evidence="4">
    <location>
        <begin position="15"/>
        <end position="47"/>
    </location>
</feature>
<feature type="region of interest" description="Disordered" evidence="4">
    <location>
        <begin position="402"/>
        <end position="431"/>
    </location>
</feature>
<feature type="compositionally biased region" description="Pro residues" evidence="4">
    <location>
        <begin position="22"/>
        <end position="34"/>
    </location>
</feature>
<feature type="compositionally biased region" description="Polar residues" evidence="4">
    <location>
        <begin position="404"/>
        <end position="413"/>
    </location>
</feature>
<feature type="sequence conflict" description="In Ref. 4; AAM63298." evidence="7" ref="4">
    <original>R</original>
    <variation>L</variation>
    <location>
        <position position="96"/>
    </location>
</feature>
<gene>
    <name type="primary">KNAT3</name>
    <name type="ordered locus">At5g25220</name>
    <name type="ORF">F21J6.18</name>
</gene>
<organism>
    <name type="scientific">Arabidopsis thaliana</name>
    <name type="common">Mouse-ear cress</name>
    <dbReference type="NCBI Taxonomy" id="3702"/>
    <lineage>
        <taxon>Eukaryota</taxon>
        <taxon>Viridiplantae</taxon>
        <taxon>Streptophyta</taxon>
        <taxon>Embryophyta</taxon>
        <taxon>Tracheophyta</taxon>
        <taxon>Spermatophyta</taxon>
        <taxon>Magnoliopsida</taxon>
        <taxon>eudicotyledons</taxon>
        <taxon>Gunneridae</taxon>
        <taxon>Pentapetalae</taxon>
        <taxon>rosids</taxon>
        <taxon>malvids</taxon>
        <taxon>Brassicales</taxon>
        <taxon>Brassicaceae</taxon>
        <taxon>Camelineae</taxon>
        <taxon>Arabidopsis</taxon>
    </lineage>
</organism>
<keyword id="KW-0025">Alternative splicing</keyword>
<keyword id="KW-0238">DNA-binding</keyword>
<keyword id="KW-0371">Homeobox</keyword>
<keyword id="KW-0539">Nucleus</keyword>
<keyword id="KW-1185">Reference proteome</keyword>
<proteinExistence type="evidence at protein level"/>
<protein>
    <recommendedName>
        <fullName>Homeobox protein knotted-1-like 3</fullName>
    </recommendedName>
    <alternativeName>
        <fullName>Protein KNAT3</fullName>
    </alternativeName>
</protein>
<sequence length="431" mass="47600">MAFHHNHLSQDLSFNHFTDQHQPPPPQPPPPPPQQQQHFQEAPPPNWLNTALLRSSDNNNNFLNLHTATANTTTASSSDSPSSAAAAAAANQWLSRSSSFLQRNNNNNASIVGDGIDDVTGGADTMIQGEMKTGGGENKNDGGGATAADGVVSWQNARHKAEILSHPLYEQLLSAHVACLRIATPVDQLPRIDAQLAQSQHVVAKYSALGAAAQGLVGDDKELDQFMTHYVLLLCSFKEQLQQHVRVHAMEAVMACWEIEQSLQSLTGVSPGEGMGATMSDDEDEQVESDANMFDGGLDVLGFGPLIPTESERSLMERVRQELKHELKQGYKEKIVDIREEILRKRRAGKLPGDTTSVLKAWWQSHSKWPYPTEEDKARLVQETGLQLKQINNWFINQRKRNWHSNPSSSTVLKNKRKSNAGDNSGRERFA</sequence>
<reference key="1">
    <citation type="journal article" date="1997" name="Plant J.">
        <title>Localization of expression of KNAT3, a class 2 knotted1-like gene.</title>
        <authorList>
            <person name="Serikawa K.A."/>
            <person name="Martinez-Laborda A."/>
            <person name="Kim H.S."/>
            <person name="Zambryski P.C."/>
        </authorList>
    </citation>
    <scope>NUCLEOTIDE SEQUENCE [MRNA]</scope>
</reference>
<reference key="2">
    <citation type="journal article" date="2000" name="Nature">
        <title>Sequence and analysis of chromosome 5 of the plant Arabidopsis thaliana.</title>
        <authorList>
            <person name="Tabata S."/>
            <person name="Kaneko T."/>
            <person name="Nakamura Y."/>
            <person name="Kotani H."/>
            <person name="Kato T."/>
            <person name="Asamizu E."/>
            <person name="Miyajima N."/>
            <person name="Sasamoto S."/>
            <person name="Kimura T."/>
            <person name="Hosouchi T."/>
            <person name="Kawashima K."/>
            <person name="Kohara M."/>
            <person name="Matsumoto M."/>
            <person name="Matsuno A."/>
            <person name="Muraki A."/>
            <person name="Nakayama S."/>
            <person name="Nakazaki N."/>
            <person name="Naruo K."/>
            <person name="Okumura S."/>
            <person name="Shinpo S."/>
            <person name="Takeuchi C."/>
            <person name="Wada T."/>
            <person name="Watanabe A."/>
            <person name="Yamada M."/>
            <person name="Yasuda M."/>
            <person name="Sato S."/>
            <person name="de la Bastide M."/>
            <person name="Huang E."/>
            <person name="Spiegel L."/>
            <person name="Gnoj L."/>
            <person name="O'Shaughnessy A."/>
            <person name="Preston R."/>
            <person name="Habermann K."/>
            <person name="Murray J."/>
            <person name="Johnson D."/>
            <person name="Rohlfing T."/>
            <person name="Nelson J."/>
            <person name="Stoneking T."/>
            <person name="Pepin K."/>
            <person name="Spieth J."/>
            <person name="Sekhon M."/>
            <person name="Armstrong J."/>
            <person name="Becker M."/>
            <person name="Belter E."/>
            <person name="Cordum H."/>
            <person name="Cordes M."/>
            <person name="Courtney L."/>
            <person name="Courtney W."/>
            <person name="Dante M."/>
            <person name="Du H."/>
            <person name="Edwards J."/>
            <person name="Fryman J."/>
            <person name="Haakensen B."/>
            <person name="Lamar E."/>
            <person name="Latreille P."/>
            <person name="Leonard S."/>
            <person name="Meyer R."/>
            <person name="Mulvaney E."/>
            <person name="Ozersky P."/>
            <person name="Riley A."/>
            <person name="Strowmatt C."/>
            <person name="Wagner-McPherson C."/>
            <person name="Wollam A."/>
            <person name="Yoakum M."/>
            <person name="Bell M."/>
            <person name="Dedhia N."/>
            <person name="Parnell L."/>
            <person name="Shah R."/>
            <person name="Rodriguez M."/>
            <person name="Hoon See L."/>
            <person name="Vil D."/>
            <person name="Baker J."/>
            <person name="Kirchoff K."/>
            <person name="Toth K."/>
            <person name="King L."/>
            <person name="Bahret A."/>
            <person name="Miller B."/>
            <person name="Marra M.A."/>
            <person name="Martienssen R."/>
            <person name="McCombie W.R."/>
            <person name="Wilson R.K."/>
            <person name="Murphy G."/>
            <person name="Bancroft I."/>
            <person name="Volckaert G."/>
            <person name="Wambutt R."/>
            <person name="Duesterhoeft A."/>
            <person name="Stiekema W."/>
            <person name="Pohl T."/>
            <person name="Entian K.-D."/>
            <person name="Terryn N."/>
            <person name="Hartley N."/>
            <person name="Bent E."/>
            <person name="Johnson S."/>
            <person name="Langham S.-A."/>
            <person name="McCullagh B."/>
            <person name="Robben J."/>
            <person name="Grymonprez B."/>
            <person name="Zimmermann W."/>
            <person name="Ramsperger U."/>
            <person name="Wedler H."/>
            <person name="Balke K."/>
            <person name="Wedler E."/>
            <person name="Peters S."/>
            <person name="van Staveren M."/>
            <person name="Dirkse W."/>
            <person name="Mooijman P."/>
            <person name="Klein Lankhorst R."/>
            <person name="Weitzenegger T."/>
            <person name="Bothe G."/>
            <person name="Rose M."/>
            <person name="Hauf J."/>
            <person name="Berneiser S."/>
            <person name="Hempel S."/>
            <person name="Feldpausch M."/>
            <person name="Lamberth S."/>
            <person name="Villarroel R."/>
            <person name="Gielen J."/>
            <person name="Ardiles W."/>
            <person name="Bents O."/>
            <person name="Lemcke K."/>
            <person name="Kolesov G."/>
            <person name="Mayer K.F.X."/>
            <person name="Rudd S."/>
            <person name="Schoof H."/>
            <person name="Schueller C."/>
            <person name="Zaccaria P."/>
            <person name="Mewes H.-W."/>
            <person name="Bevan M."/>
            <person name="Fransz P.F."/>
        </authorList>
    </citation>
    <scope>NUCLEOTIDE SEQUENCE [LARGE SCALE GENOMIC DNA]</scope>
    <source>
        <strain>cv. Columbia</strain>
    </source>
</reference>
<reference key="3">
    <citation type="journal article" date="2017" name="Plant J.">
        <title>Araport11: a complete reannotation of the Arabidopsis thaliana reference genome.</title>
        <authorList>
            <person name="Cheng C.Y."/>
            <person name="Krishnakumar V."/>
            <person name="Chan A.P."/>
            <person name="Thibaud-Nissen F."/>
            <person name="Schobel S."/>
            <person name="Town C.D."/>
        </authorList>
    </citation>
    <scope>GENOME REANNOTATION</scope>
    <source>
        <strain>cv. Columbia</strain>
    </source>
</reference>
<reference key="4">
    <citation type="submission" date="2002-03" db="EMBL/GenBank/DDBJ databases">
        <title>Full-length cDNA from Arabidopsis thaliana.</title>
        <authorList>
            <person name="Brover V.V."/>
            <person name="Troukhan M.E."/>
            <person name="Alexandrov N.A."/>
            <person name="Lu Y.-P."/>
            <person name="Flavell R.B."/>
            <person name="Feldmann K.A."/>
        </authorList>
    </citation>
    <scope>NUCLEOTIDE SEQUENCE [LARGE SCALE MRNA]</scope>
</reference>
<reference key="5">
    <citation type="journal article" date="2003" name="Science">
        <title>Empirical analysis of transcriptional activity in the Arabidopsis genome.</title>
        <authorList>
            <person name="Yamada K."/>
            <person name="Lim J."/>
            <person name="Dale J.M."/>
            <person name="Chen H."/>
            <person name="Shinn P."/>
            <person name="Palm C.J."/>
            <person name="Southwick A.M."/>
            <person name="Wu H.C."/>
            <person name="Kim C.J."/>
            <person name="Nguyen M."/>
            <person name="Pham P.K."/>
            <person name="Cheuk R.F."/>
            <person name="Karlin-Newmann G."/>
            <person name="Liu S.X."/>
            <person name="Lam B."/>
            <person name="Sakano H."/>
            <person name="Wu T."/>
            <person name="Yu G."/>
            <person name="Miranda M."/>
            <person name="Quach H.L."/>
            <person name="Tripp M."/>
            <person name="Chang C.H."/>
            <person name="Lee J.M."/>
            <person name="Toriumi M.J."/>
            <person name="Chan M.M."/>
            <person name="Tang C.C."/>
            <person name="Onodera C.S."/>
            <person name="Deng J.M."/>
            <person name="Akiyama K."/>
            <person name="Ansari Y."/>
            <person name="Arakawa T."/>
            <person name="Banh J."/>
            <person name="Banno F."/>
            <person name="Bowser L."/>
            <person name="Brooks S.Y."/>
            <person name="Carninci P."/>
            <person name="Chao Q."/>
            <person name="Choy N."/>
            <person name="Enju A."/>
            <person name="Goldsmith A.D."/>
            <person name="Gurjal M."/>
            <person name="Hansen N.F."/>
            <person name="Hayashizaki Y."/>
            <person name="Johnson-Hopson C."/>
            <person name="Hsuan V.W."/>
            <person name="Iida K."/>
            <person name="Karnes M."/>
            <person name="Khan S."/>
            <person name="Koesema E."/>
            <person name="Ishida J."/>
            <person name="Jiang P.X."/>
            <person name="Jones T."/>
            <person name="Kawai J."/>
            <person name="Kamiya A."/>
            <person name="Meyers C."/>
            <person name="Nakajima M."/>
            <person name="Narusaka M."/>
            <person name="Seki M."/>
            <person name="Sakurai T."/>
            <person name="Satou M."/>
            <person name="Tamse R."/>
            <person name="Vaysberg M."/>
            <person name="Wallender E.K."/>
            <person name="Wong C."/>
            <person name="Yamamura Y."/>
            <person name="Yuan S."/>
            <person name="Shinozaki K."/>
            <person name="Davis R.W."/>
            <person name="Theologis A."/>
            <person name="Ecker J.R."/>
        </authorList>
    </citation>
    <scope>NUCLEOTIDE SEQUENCE [LARGE SCALE MRNA] OF 17-431 AND 126-431</scope>
    <source>
        <strain>cv. Columbia</strain>
    </source>
</reference>
<reference key="6">
    <citation type="journal article" date="2005" name="Proc. Natl. Acad. Sci. U.S.A.">
        <title>A central role of Arabidopsis thaliana ovate family proteins in networking and subcellular localization of 3-aa loop extension homeodomain proteins.</title>
        <authorList>
            <person name="Hackbusch J."/>
            <person name="Richter K."/>
            <person name="Muller J."/>
            <person name="Salamini F."/>
            <person name="Uhrig J.F."/>
        </authorList>
    </citation>
    <scope>INTERACTION WITH OFP1; OFP2; OFP4; OFP12 AND OFP14</scope>
</reference>
<reference key="7">
    <citation type="journal article" date="2008" name="Plant Cell">
        <title>KNOX lost the OX: the Arabidopsis KNATM gene defines a novel class of KNOX transcriptional regulators missing the homeodomain.</title>
        <authorList>
            <person name="Magnani E."/>
            <person name="Hake S."/>
        </authorList>
    </citation>
    <scope>INTERACTION WITH KNATM</scope>
</reference>
<name>KNAT3_ARATH</name>
<evidence type="ECO:0000250" key="1"/>
<evidence type="ECO:0000255" key="2">
    <source>
        <dbReference type="PROSITE-ProRule" id="PRU00108"/>
    </source>
</evidence>
<evidence type="ECO:0000255" key="3">
    <source>
        <dbReference type="PROSITE-ProRule" id="PRU00559"/>
    </source>
</evidence>
<evidence type="ECO:0000256" key="4">
    <source>
        <dbReference type="SAM" id="MobiDB-lite"/>
    </source>
</evidence>
<evidence type="ECO:0000269" key="5">
    <source>
    </source>
</evidence>
<evidence type="ECO:0000269" key="6">
    <source>
    </source>
</evidence>
<evidence type="ECO:0000305" key="7"/>
<dbReference type="EMBL" id="X92392">
    <property type="protein sequence ID" value="CAA63130.1"/>
    <property type="molecule type" value="mRNA"/>
</dbReference>
<dbReference type="EMBL" id="AC006259">
    <property type="protein sequence ID" value="AAC98441.1"/>
    <property type="molecule type" value="Genomic_DNA"/>
</dbReference>
<dbReference type="EMBL" id="CP002688">
    <property type="protein sequence ID" value="AED93413.1"/>
    <property type="molecule type" value="Genomic_DNA"/>
</dbReference>
<dbReference type="EMBL" id="AY086091">
    <property type="protein sequence ID" value="AAM63298.1"/>
    <property type="molecule type" value="mRNA"/>
</dbReference>
<dbReference type="EMBL" id="AY120762">
    <property type="protein sequence ID" value="AAM53320.1"/>
    <property type="status" value="ALT_INIT"/>
    <property type="molecule type" value="mRNA"/>
</dbReference>
<dbReference type="EMBL" id="BT000139">
    <property type="protein sequence ID" value="AAN15458.1"/>
    <property type="molecule type" value="mRNA"/>
</dbReference>
<dbReference type="RefSeq" id="NP_197904.1">
    <molecule id="P48000-1"/>
    <property type="nucleotide sequence ID" value="NM_122431.3"/>
</dbReference>
<dbReference type="SMR" id="P48000"/>
<dbReference type="BioGRID" id="17868">
    <property type="interactions" value="66"/>
</dbReference>
<dbReference type="FunCoup" id="P48000">
    <property type="interactions" value="281"/>
</dbReference>
<dbReference type="IntAct" id="P48000">
    <property type="interactions" value="61"/>
</dbReference>
<dbReference type="STRING" id="3702.P48000"/>
<dbReference type="GlyGen" id="P48000">
    <property type="glycosylation" value="1 site, 1 O-linked glycan (1 site)"/>
</dbReference>
<dbReference type="iPTMnet" id="P48000"/>
<dbReference type="PaxDb" id="3702-AT5G25220.1"/>
<dbReference type="ProteomicsDB" id="237092">
    <molecule id="P48000-1"/>
</dbReference>
<dbReference type="EnsemblPlants" id="AT5G25220.1">
    <molecule id="P48000-1"/>
    <property type="protein sequence ID" value="AT5G25220.1"/>
    <property type="gene ID" value="AT5G25220"/>
</dbReference>
<dbReference type="GeneID" id="832593"/>
<dbReference type="Gramene" id="AT5G25220.1">
    <molecule id="P48000-1"/>
    <property type="protein sequence ID" value="AT5G25220.1"/>
    <property type="gene ID" value="AT5G25220"/>
</dbReference>
<dbReference type="KEGG" id="ath:AT5G25220"/>
<dbReference type="Araport" id="AT5G25220"/>
<dbReference type="TAIR" id="AT5G25220">
    <property type="gene designation" value="KNAT3"/>
</dbReference>
<dbReference type="eggNOG" id="KOG0773">
    <property type="taxonomic scope" value="Eukaryota"/>
</dbReference>
<dbReference type="InParanoid" id="P48000"/>
<dbReference type="PhylomeDB" id="P48000"/>
<dbReference type="PRO" id="PR:P48000"/>
<dbReference type="Proteomes" id="UP000006548">
    <property type="component" value="Chromosome 5"/>
</dbReference>
<dbReference type="ExpressionAtlas" id="P48000">
    <property type="expression patterns" value="baseline and differential"/>
</dbReference>
<dbReference type="GO" id="GO:0005829">
    <property type="term" value="C:cytosol"/>
    <property type="evidence" value="ECO:0000314"/>
    <property type="project" value="TAIR"/>
</dbReference>
<dbReference type="GO" id="GO:0005634">
    <property type="term" value="C:nucleus"/>
    <property type="evidence" value="ECO:0000314"/>
    <property type="project" value="TAIR"/>
</dbReference>
<dbReference type="GO" id="GO:0003677">
    <property type="term" value="F:DNA binding"/>
    <property type="evidence" value="ECO:0007669"/>
    <property type="project" value="UniProtKB-KW"/>
</dbReference>
<dbReference type="GO" id="GO:0003700">
    <property type="term" value="F:DNA-binding transcription factor activity"/>
    <property type="evidence" value="ECO:0000250"/>
    <property type="project" value="TAIR"/>
</dbReference>
<dbReference type="GO" id="GO:0071345">
    <property type="term" value="P:cellular response to cytokine stimulus"/>
    <property type="evidence" value="ECO:0000314"/>
    <property type="project" value="TAIR"/>
</dbReference>
<dbReference type="GO" id="GO:0009722">
    <property type="term" value="P:detection of cytokinin stimulus"/>
    <property type="evidence" value="ECO:0000270"/>
    <property type="project" value="TAIR"/>
</dbReference>
<dbReference type="GO" id="GO:0009416">
    <property type="term" value="P:response to light stimulus"/>
    <property type="evidence" value="ECO:0000270"/>
    <property type="project" value="TAIR"/>
</dbReference>
<dbReference type="CDD" id="cd00086">
    <property type="entry name" value="homeodomain"/>
    <property type="match status" value="1"/>
</dbReference>
<dbReference type="FunFam" id="1.10.10.60:FF:000143">
    <property type="entry name" value="homeobox protein knotted-1-like 3 isoform X1"/>
    <property type="match status" value="1"/>
</dbReference>
<dbReference type="Gene3D" id="1.10.10.60">
    <property type="entry name" value="Homeodomain-like"/>
    <property type="match status" value="1"/>
</dbReference>
<dbReference type="InterPro" id="IPR005539">
    <property type="entry name" value="ELK_dom"/>
</dbReference>
<dbReference type="InterPro" id="IPR001356">
    <property type="entry name" value="HD"/>
</dbReference>
<dbReference type="InterPro" id="IPR009057">
    <property type="entry name" value="Homeodomain-like_sf"/>
</dbReference>
<dbReference type="InterPro" id="IPR008422">
    <property type="entry name" value="KN_HD"/>
</dbReference>
<dbReference type="InterPro" id="IPR005540">
    <property type="entry name" value="KNOX1"/>
</dbReference>
<dbReference type="InterPro" id="IPR005541">
    <property type="entry name" value="KNOX2"/>
</dbReference>
<dbReference type="InterPro" id="IPR050224">
    <property type="entry name" value="TALE_homeobox"/>
</dbReference>
<dbReference type="PANTHER" id="PTHR11850">
    <property type="entry name" value="HOMEOBOX PROTEIN TRANSCRIPTION FACTORS"/>
    <property type="match status" value="1"/>
</dbReference>
<dbReference type="Pfam" id="PF03789">
    <property type="entry name" value="ELK"/>
    <property type="match status" value="1"/>
</dbReference>
<dbReference type="Pfam" id="PF05920">
    <property type="entry name" value="Homeobox_KN"/>
    <property type="match status" value="1"/>
</dbReference>
<dbReference type="Pfam" id="PF03790">
    <property type="entry name" value="KNOX1"/>
    <property type="match status" value="1"/>
</dbReference>
<dbReference type="Pfam" id="PF03791">
    <property type="entry name" value="KNOX2"/>
    <property type="match status" value="1"/>
</dbReference>
<dbReference type="SMART" id="SM01188">
    <property type="entry name" value="ELK"/>
    <property type="match status" value="1"/>
</dbReference>
<dbReference type="SMART" id="SM00389">
    <property type="entry name" value="HOX"/>
    <property type="match status" value="1"/>
</dbReference>
<dbReference type="SMART" id="SM01255">
    <property type="entry name" value="KNOX1"/>
    <property type="match status" value="1"/>
</dbReference>
<dbReference type="SMART" id="SM01256">
    <property type="entry name" value="KNOX2"/>
    <property type="match status" value="1"/>
</dbReference>
<dbReference type="SUPFAM" id="SSF46689">
    <property type="entry name" value="Homeodomain-like"/>
    <property type="match status" value="1"/>
</dbReference>
<dbReference type="PROSITE" id="PS51213">
    <property type="entry name" value="ELK"/>
    <property type="match status" value="1"/>
</dbReference>
<dbReference type="PROSITE" id="PS00027">
    <property type="entry name" value="HOMEOBOX_1"/>
    <property type="match status" value="1"/>
</dbReference>
<dbReference type="PROSITE" id="PS50071">
    <property type="entry name" value="HOMEOBOX_2"/>
    <property type="match status" value="1"/>
</dbReference>
<comment type="subunit">
    <text evidence="1 5 6">May form heterodimeric complex with the TALE/BELL proteins (By similarity). Interacts with OFP1, OFP2, OFP4, OFP12 and OFP14 (PubMed:15781858). Interacts with KNATM-B (PubMed:18398054).</text>
</comment>
<comment type="interaction">
    <interactant intactId="EBI-1153908">
        <id>P48000</id>
    </interactant>
    <interactant intactId="EBI-1153783">
        <id>Q38897</id>
        <label>BEL1</label>
    </interactant>
    <organismsDiffer>false</organismsDiffer>
    <experiments>3</experiments>
</comment>
<comment type="interaction">
    <interactant intactId="EBI-1153908">
        <id>P48000</id>
    </interactant>
    <interactant intactId="EBI-912915">
        <id>Q9FWS9</id>
        <label>BLH3</label>
    </interactant>
    <organismsDiffer>false</organismsDiffer>
    <experiments>3</experiments>
</comment>
<comment type="interaction">
    <interactant intactId="EBI-1153908">
        <id>P48000</id>
    </interactant>
    <interactant intactId="EBI-1153992">
        <id>Q8S897</id>
        <label>BLH5</label>
    </interactant>
    <organismsDiffer>false</organismsDiffer>
    <experiments>3</experiments>
</comment>
<comment type="interaction">
    <interactant intactId="EBI-1153908">
        <id>P48000</id>
    </interactant>
    <interactant intactId="EBI-1153967">
        <id>Q9SIW1</id>
        <label>BLH7</label>
    </interactant>
    <organismsDiffer>false</organismsDiffer>
    <experiments>3</experiments>
</comment>
<comment type="interaction">
    <interactant intactId="EBI-1153908">
        <id>P48000</id>
    </interactant>
    <interactant intactId="EBI-963606">
        <id>Q9LQT8</id>
        <label>GAI</label>
    </interactant>
    <organismsDiffer>false</organismsDiffer>
    <experiments>3</experiments>
</comment>
<comment type="interaction">
    <interactant intactId="EBI-1153908">
        <id>P48000</id>
    </interactant>
    <interactant intactId="EBI-963665">
        <id>Q8GXW1</id>
        <label>RGL2</label>
    </interactant>
    <organismsDiffer>false</organismsDiffer>
    <experiments>3</experiments>
</comment>
<comment type="interaction">
    <interactant intactId="EBI-1153908">
        <id>P48000</id>
    </interactant>
    <interactant intactId="EBI-15192297">
        <id>Q9LQF0</id>
        <label>TCP23</label>
    </interactant>
    <organismsDiffer>false</organismsDiffer>
    <experiments>3</experiments>
</comment>
<comment type="subcellular location">
    <subcellularLocation>
        <location evidence="7">Nucleus</location>
    </subcellularLocation>
</comment>
<comment type="alternative products">
    <event type="alternative splicing"/>
    <isoform>
        <id>P48000-1</id>
        <name>1</name>
        <sequence type="displayed"/>
    </isoform>
    <text>A number of isoforms are produced. According to EST sequences.</text>
</comment>
<comment type="similarity">
    <text evidence="3">Belongs to the TALE/KNOX homeobox family.</text>
</comment>
<comment type="sequence caution" evidence="7">
    <conflict type="erroneous initiation">
        <sequence resource="EMBL-CDS" id="AAM53320"/>
    </conflict>
    <text>Truncated N-terminus.</text>
</comment>
<accession>P48000</accession>
<accession>Q8L839</accession>
<accession>Q8LDC1</accession>